<gene>
    <name evidence="1" type="primary">rplU</name>
    <name type="ordered locus">BMA10229_A1305</name>
</gene>
<keyword id="KW-0687">Ribonucleoprotein</keyword>
<keyword id="KW-0689">Ribosomal protein</keyword>
<keyword id="KW-0694">RNA-binding</keyword>
<keyword id="KW-0699">rRNA-binding</keyword>
<organism>
    <name type="scientific">Burkholderia mallei (strain NCTC 10229)</name>
    <dbReference type="NCBI Taxonomy" id="412022"/>
    <lineage>
        <taxon>Bacteria</taxon>
        <taxon>Pseudomonadati</taxon>
        <taxon>Pseudomonadota</taxon>
        <taxon>Betaproteobacteria</taxon>
        <taxon>Burkholderiales</taxon>
        <taxon>Burkholderiaceae</taxon>
        <taxon>Burkholderia</taxon>
        <taxon>pseudomallei group</taxon>
    </lineage>
</organism>
<name>RL21_BURM9</name>
<proteinExistence type="inferred from homology"/>
<evidence type="ECO:0000255" key="1">
    <source>
        <dbReference type="HAMAP-Rule" id="MF_01363"/>
    </source>
</evidence>
<evidence type="ECO:0000305" key="2"/>
<dbReference type="EMBL" id="CP000546">
    <property type="protein sequence ID" value="ABN02876.1"/>
    <property type="molecule type" value="Genomic_DNA"/>
</dbReference>
<dbReference type="RefSeq" id="WP_004194344.1">
    <property type="nucleotide sequence ID" value="NC_008836.1"/>
</dbReference>
<dbReference type="SMR" id="A2S5S0"/>
<dbReference type="GeneID" id="93061605"/>
<dbReference type="KEGG" id="bml:BMA10229_A1305"/>
<dbReference type="HOGENOM" id="CLU_061463_3_1_4"/>
<dbReference type="Proteomes" id="UP000002283">
    <property type="component" value="Chromosome I"/>
</dbReference>
<dbReference type="GO" id="GO:0005737">
    <property type="term" value="C:cytoplasm"/>
    <property type="evidence" value="ECO:0007669"/>
    <property type="project" value="UniProtKB-ARBA"/>
</dbReference>
<dbReference type="GO" id="GO:1990904">
    <property type="term" value="C:ribonucleoprotein complex"/>
    <property type="evidence" value="ECO:0007669"/>
    <property type="project" value="UniProtKB-KW"/>
</dbReference>
<dbReference type="GO" id="GO:0005840">
    <property type="term" value="C:ribosome"/>
    <property type="evidence" value="ECO:0007669"/>
    <property type="project" value="UniProtKB-KW"/>
</dbReference>
<dbReference type="GO" id="GO:0019843">
    <property type="term" value="F:rRNA binding"/>
    <property type="evidence" value="ECO:0007669"/>
    <property type="project" value="UniProtKB-UniRule"/>
</dbReference>
<dbReference type="GO" id="GO:0003735">
    <property type="term" value="F:structural constituent of ribosome"/>
    <property type="evidence" value="ECO:0007669"/>
    <property type="project" value="InterPro"/>
</dbReference>
<dbReference type="GO" id="GO:0006412">
    <property type="term" value="P:translation"/>
    <property type="evidence" value="ECO:0007669"/>
    <property type="project" value="UniProtKB-UniRule"/>
</dbReference>
<dbReference type="HAMAP" id="MF_01363">
    <property type="entry name" value="Ribosomal_bL21"/>
    <property type="match status" value="1"/>
</dbReference>
<dbReference type="InterPro" id="IPR028909">
    <property type="entry name" value="bL21-like"/>
</dbReference>
<dbReference type="InterPro" id="IPR036164">
    <property type="entry name" value="bL21-like_sf"/>
</dbReference>
<dbReference type="InterPro" id="IPR001787">
    <property type="entry name" value="Ribosomal_bL21"/>
</dbReference>
<dbReference type="InterPro" id="IPR018258">
    <property type="entry name" value="Ribosomal_bL21_CS"/>
</dbReference>
<dbReference type="NCBIfam" id="TIGR00061">
    <property type="entry name" value="L21"/>
    <property type="match status" value="1"/>
</dbReference>
<dbReference type="PANTHER" id="PTHR21349">
    <property type="entry name" value="50S RIBOSOMAL PROTEIN L21"/>
    <property type="match status" value="1"/>
</dbReference>
<dbReference type="PANTHER" id="PTHR21349:SF0">
    <property type="entry name" value="LARGE RIBOSOMAL SUBUNIT PROTEIN BL21M"/>
    <property type="match status" value="1"/>
</dbReference>
<dbReference type="Pfam" id="PF00829">
    <property type="entry name" value="Ribosomal_L21p"/>
    <property type="match status" value="1"/>
</dbReference>
<dbReference type="SUPFAM" id="SSF141091">
    <property type="entry name" value="L21p-like"/>
    <property type="match status" value="1"/>
</dbReference>
<dbReference type="PROSITE" id="PS01169">
    <property type="entry name" value="RIBOSOMAL_L21"/>
    <property type="match status" value="1"/>
</dbReference>
<sequence length="103" mass="11356">MYAVIKTGGKQYKVAVGEKLKVEQIPADIDAEITLDQVLAVGEGESIQFGTPLVSGASVKATVVSHGRHAKVTIFKMRRRKHYQKHGGHRQNYTELRIDAINA</sequence>
<comment type="function">
    <text evidence="1">This protein binds to 23S rRNA in the presence of protein L20.</text>
</comment>
<comment type="subunit">
    <text evidence="1">Part of the 50S ribosomal subunit. Contacts protein L20.</text>
</comment>
<comment type="similarity">
    <text evidence="1">Belongs to the bacterial ribosomal protein bL21 family.</text>
</comment>
<feature type="chain" id="PRO_1000067812" description="Large ribosomal subunit protein bL21">
    <location>
        <begin position="1"/>
        <end position="103"/>
    </location>
</feature>
<reference key="1">
    <citation type="journal article" date="2010" name="Genome Biol. Evol.">
        <title>Continuing evolution of Burkholderia mallei through genome reduction and large-scale rearrangements.</title>
        <authorList>
            <person name="Losada L."/>
            <person name="Ronning C.M."/>
            <person name="DeShazer D."/>
            <person name="Woods D."/>
            <person name="Fedorova N."/>
            <person name="Kim H.S."/>
            <person name="Shabalina S.A."/>
            <person name="Pearson T.R."/>
            <person name="Brinkac L."/>
            <person name="Tan P."/>
            <person name="Nandi T."/>
            <person name="Crabtree J."/>
            <person name="Badger J."/>
            <person name="Beckstrom-Sternberg S."/>
            <person name="Saqib M."/>
            <person name="Schutzer S.E."/>
            <person name="Keim P."/>
            <person name="Nierman W.C."/>
        </authorList>
    </citation>
    <scope>NUCLEOTIDE SEQUENCE [LARGE SCALE GENOMIC DNA]</scope>
    <source>
        <strain>NCTC 10229</strain>
    </source>
</reference>
<protein>
    <recommendedName>
        <fullName evidence="1">Large ribosomal subunit protein bL21</fullName>
    </recommendedName>
    <alternativeName>
        <fullName evidence="2">50S ribosomal protein L21</fullName>
    </alternativeName>
</protein>
<accession>A2S5S0</accession>